<protein>
    <recommendedName>
        <fullName evidence="1">Tryptophan synthase beta chain</fullName>
        <ecNumber evidence="1">4.2.1.20</ecNumber>
    </recommendedName>
</protein>
<keyword id="KW-0028">Amino-acid biosynthesis</keyword>
<keyword id="KW-0057">Aromatic amino acid biosynthesis</keyword>
<keyword id="KW-0456">Lyase</keyword>
<keyword id="KW-0663">Pyridoxal phosphate</keyword>
<keyword id="KW-0822">Tryptophan biosynthesis</keyword>
<evidence type="ECO:0000255" key="1">
    <source>
        <dbReference type="HAMAP-Rule" id="MF_00133"/>
    </source>
</evidence>
<evidence type="ECO:0000305" key="2"/>
<feature type="chain" id="PRO_0000098924" description="Tryptophan synthase beta chain">
    <location>
        <begin position="1"/>
        <end position="406"/>
    </location>
</feature>
<feature type="modified residue" description="N6-(pyridoxal phosphate)lysine" evidence="1">
    <location>
        <position position="99"/>
    </location>
</feature>
<proteinExistence type="inferred from homology"/>
<sequence>MNKPVAPNSYKTGPDEEGMFGIFGGRFVAETLMPLILELQQAYETAKNDPEFKAELNALSTFYAGRPSKLYYAEGLSKHLGGAKIYFKREDLNHTGSHKINNCLGQILLAKRMGKTRIIAETGAGQHGVASATVAARFGLPCIVYVGASDVERQKPNVFRMKLLGAEVKPVSAGNGTLKDAMNEALRDWVTNVEDTYYLIGTAAGPHPYPELVRDFQSVIGTEARQQILEQEGRLPDVIVAAVGGGSNAIGLFHPFLDDASVKIVGVEAGGRGLEGEEHCASMSAGRPGVLHGNRTYLLQNADGQILEGHSVSAGLDYPGVGPEHSWLKDSGRVDYVPILDNEALDAFQLCTRTEGIIPALESAHAIAQAVKMAPTMGKDKVMIVNLSGRGDKDVHTVGKLLGMDI</sequence>
<name>TRPB_BRUME</name>
<reference key="1">
    <citation type="journal article" date="2002" name="Proc. Natl. Acad. Sci. U.S.A.">
        <title>The genome sequence of the facultative intracellular pathogen Brucella melitensis.</title>
        <authorList>
            <person name="DelVecchio V.G."/>
            <person name="Kapatral V."/>
            <person name="Redkar R.J."/>
            <person name="Patra G."/>
            <person name="Mujer C."/>
            <person name="Los T."/>
            <person name="Ivanova N."/>
            <person name="Anderson I."/>
            <person name="Bhattacharyya A."/>
            <person name="Lykidis A."/>
            <person name="Reznik G."/>
            <person name="Jablonski L."/>
            <person name="Larsen N."/>
            <person name="D'Souza M."/>
            <person name="Bernal A."/>
            <person name="Mazur M."/>
            <person name="Goltsman E."/>
            <person name="Selkov E."/>
            <person name="Elzer P.H."/>
            <person name="Hagius S."/>
            <person name="O'Callaghan D."/>
            <person name="Letesson J.-J."/>
            <person name="Haselkorn R."/>
            <person name="Kyrpides N.C."/>
            <person name="Overbeek R."/>
        </authorList>
    </citation>
    <scope>NUCLEOTIDE SEQUENCE [LARGE SCALE GENOMIC DNA]</scope>
    <source>
        <strain>ATCC 23456 / CCUG 17765 / NCTC 10094 / 16M</strain>
    </source>
</reference>
<dbReference type="EC" id="4.2.1.20" evidence="1"/>
<dbReference type="EMBL" id="AE008917">
    <property type="protein sequence ID" value="AAL53199.1"/>
    <property type="status" value="ALT_INIT"/>
    <property type="molecule type" value="Genomic_DNA"/>
</dbReference>
<dbReference type="PIR" id="AD3504">
    <property type="entry name" value="AD3504"/>
</dbReference>
<dbReference type="SMR" id="Q8YE60"/>
<dbReference type="KEGG" id="bme:BMEI2018"/>
<dbReference type="KEGG" id="bmel:DK63_1474"/>
<dbReference type="PATRIC" id="fig|224914.52.peg.1552"/>
<dbReference type="eggNOG" id="COG0133">
    <property type="taxonomic scope" value="Bacteria"/>
</dbReference>
<dbReference type="UniPathway" id="UPA00035">
    <property type="reaction ID" value="UER00044"/>
</dbReference>
<dbReference type="Proteomes" id="UP000000419">
    <property type="component" value="Chromosome I"/>
</dbReference>
<dbReference type="GO" id="GO:0005737">
    <property type="term" value="C:cytoplasm"/>
    <property type="evidence" value="ECO:0007669"/>
    <property type="project" value="TreeGrafter"/>
</dbReference>
<dbReference type="GO" id="GO:0004834">
    <property type="term" value="F:tryptophan synthase activity"/>
    <property type="evidence" value="ECO:0007669"/>
    <property type="project" value="UniProtKB-UniRule"/>
</dbReference>
<dbReference type="CDD" id="cd06446">
    <property type="entry name" value="Trp-synth_B"/>
    <property type="match status" value="1"/>
</dbReference>
<dbReference type="FunFam" id="3.40.50.1100:FF:000001">
    <property type="entry name" value="Tryptophan synthase beta chain"/>
    <property type="match status" value="1"/>
</dbReference>
<dbReference type="FunFam" id="3.40.50.1100:FF:000004">
    <property type="entry name" value="Tryptophan synthase beta chain"/>
    <property type="match status" value="1"/>
</dbReference>
<dbReference type="Gene3D" id="3.40.50.1100">
    <property type="match status" value="2"/>
</dbReference>
<dbReference type="HAMAP" id="MF_00133">
    <property type="entry name" value="Trp_synth_beta"/>
    <property type="match status" value="1"/>
</dbReference>
<dbReference type="InterPro" id="IPR006653">
    <property type="entry name" value="Trp_synth_b_CS"/>
</dbReference>
<dbReference type="InterPro" id="IPR006654">
    <property type="entry name" value="Trp_synth_beta"/>
</dbReference>
<dbReference type="InterPro" id="IPR023026">
    <property type="entry name" value="Trp_synth_beta/beta-like"/>
</dbReference>
<dbReference type="InterPro" id="IPR001926">
    <property type="entry name" value="TrpB-like_PALP"/>
</dbReference>
<dbReference type="InterPro" id="IPR036052">
    <property type="entry name" value="TrpB-like_PALP_sf"/>
</dbReference>
<dbReference type="NCBIfam" id="TIGR00263">
    <property type="entry name" value="trpB"/>
    <property type="match status" value="1"/>
</dbReference>
<dbReference type="PANTHER" id="PTHR48077:SF3">
    <property type="entry name" value="TRYPTOPHAN SYNTHASE"/>
    <property type="match status" value="1"/>
</dbReference>
<dbReference type="PANTHER" id="PTHR48077">
    <property type="entry name" value="TRYPTOPHAN SYNTHASE-RELATED"/>
    <property type="match status" value="1"/>
</dbReference>
<dbReference type="Pfam" id="PF00291">
    <property type="entry name" value="PALP"/>
    <property type="match status" value="1"/>
</dbReference>
<dbReference type="PIRSF" id="PIRSF001413">
    <property type="entry name" value="Trp_syn_beta"/>
    <property type="match status" value="1"/>
</dbReference>
<dbReference type="SUPFAM" id="SSF53686">
    <property type="entry name" value="Tryptophan synthase beta subunit-like PLP-dependent enzymes"/>
    <property type="match status" value="1"/>
</dbReference>
<dbReference type="PROSITE" id="PS00168">
    <property type="entry name" value="TRP_SYNTHASE_BETA"/>
    <property type="match status" value="1"/>
</dbReference>
<organism>
    <name type="scientific">Brucella melitensis biotype 1 (strain ATCC 23456 / CCUG 17765 / NCTC 10094 / 16M)</name>
    <dbReference type="NCBI Taxonomy" id="224914"/>
    <lineage>
        <taxon>Bacteria</taxon>
        <taxon>Pseudomonadati</taxon>
        <taxon>Pseudomonadota</taxon>
        <taxon>Alphaproteobacteria</taxon>
        <taxon>Hyphomicrobiales</taxon>
        <taxon>Brucellaceae</taxon>
        <taxon>Brucella/Ochrobactrum group</taxon>
        <taxon>Brucella</taxon>
    </lineage>
</organism>
<gene>
    <name evidence="1" type="primary">trpB</name>
    <name type="ordered locus">BMEI2018</name>
</gene>
<comment type="function">
    <text evidence="1">The beta subunit is responsible for the synthesis of L-tryptophan from indole and L-serine.</text>
</comment>
<comment type="catalytic activity">
    <reaction evidence="1">
        <text>(1S,2R)-1-C-(indol-3-yl)glycerol 3-phosphate + L-serine = D-glyceraldehyde 3-phosphate + L-tryptophan + H2O</text>
        <dbReference type="Rhea" id="RHEA:10532"/>
        <dbReference type="ChEBI" id="CHEBI:15377"/>
        <dbReference type="ChEBI" id="CHEBI:33384"/>
        <dbReference type="ChEBI" id="CHEBI:57912"/>
        <dbReference type="ChEBI" id="CHEBI:58866"/>
        <dbReference type="ChEBI" id="CHEBI:59776"/>
        <dbReference type="EC" id="4.2.1.20"/>
    </reaction>
</comment>
<comment type="cofactor">
    <cofactor evidence="1">
        <name>pyridoxal 5'-phosphate</name>
        <dbReference type="ChEBI" id="CHEBI:597326"/>
    </cofactor>
</comment>
<comment type="pathway">
    <text evidence="1">Amino-acid biosynthesis; L-tryptophan biosynthesis; L-tryptophan from chorismate: step 5/5.</text>
</comment>
<comment type="subunit">
    <text evidence="1">Tetramer of two alpha and two beta chains.</text>
</comment>
<comment type="similarity">
    <text evidence="1">Belongs to the TrpB family.</text>
</comment>
<comment type="sequence caution" evidence="2">
    <conflict type="erroneous initiation">
        <sequence resource="EMBL-CDS" id="AAL53199"/>
    </conflict>
</comment>
<accession>Q8YE60</accession>